<sequence length="264" mass="30042">MKIEAVIFDWAGTTVDYGCFAPLEVFMEIFHKRGVGITAEEARKPMGLLKIDHVRALTEMPRIANEWNRIFGKLPTETDIQEMYEEFEEILFAILPRYASPIHGVKEVIASLRERGIKIGSTTGYTREMMDIVAKEAALQGYKPDFLVTPDDVPAGRPYPWMCYKNAMELGVYPMNHMIKIGDTVSDMKEGRNAGMWTVGVILGSSELGLSEEEVENMDPAELREKIEVVRNRFVENGAHFTIETMQELESVMERIEKQELIIS</sequence>
<evidence type="ECO:0000255" key="1">
    <source>
        <dbReference type="HAMAP-Rule" id="MF_01375"/>
    </source>
</evidence>
<organism>
    <name type="scientific">Bacillus cereus (strain ZK / E33L)</name>
    <dbReference type="NCBI Taxonomy" id="288681"/>
    <lineage>
        <taxon>Bacteria</taxon>
        <taxon>Bacillati</taxon>
        <taxon>Bacillota</taxon>
        <taxon>Bacilli</taxon>
        <taxon>Bacillales</taxon>
        <taxon>Bacillaceae</taxon>
        <taxon>Bacillus</taxon>
        <taxon>Bacillus cereus group</taxon>
    </lineage>
</organism>
<protein>
    <recommendedName>
        <fullName evidence="1">Phosphonoacetaldehyde hydrolase</fullName>
        <shortName evidence="1">Phosphonatase</shortName>
        <ecNumber evidence="1">3.11.1.1</ecNumber>
    </recommendedName>
    <alternativeName>
        <fullName evidence="1">Phosphonoacetaldehyde phosphonohydrolase</fullName>
    </alternativeName>
</protein>
<comment type="function">
    <text evidence="1">Involved in phosphonate degradation.</text>
</comment>
<comment type="catalytic activity">
    <reaction evidence="1">
        <text>phosphonoacetaldehyde + H2O = acetaldehyde + phosphate + H(+)</text>
        <dbReference type="Rhea" id="RHEA:18905"/>
        <dbReference type="ChEBI" id="CHEBI:15343"/>
        <dbReference type="ChEBI" id="CHEBI:15377"/>
        <dbReference type="ChEBI" id="CHEBI:15378"/>
        <dbReference type="ChEBI" id="CHEBI:43474"/>
        <dbReference type="ChEBI" id="CHEBI:58383"/>
        <dbReference type="EC" id="3.11.1.1"/>
    </reaction>
</comment>
<comment type="cofactor">
    <cofactor evidence="1">
        <name>Mg(2+)</name>
        <dbReference type="ChEBI" id="CHEBI:18420"/>
    </cofactor>
    <text evidence="1">Binds 1 Mg(2+) ion per subunit.</text>
</comment>
<comment type="subunit">
    <text evidence="1">Homodimer.</text>
</comment>
<comment type="similarity">
    <text evidence="1">Belongs to the HAD-like hydrolase superfamily. PhnX family.</text>
</comment>
<proteinExistence type="inferred from homology"/>
<reference key="1">
    <citation type="journal article" date="2006" name="J. Bacteriol.">
        <title>Pathogenomic sequence analysis of Bacillus cereus and Bacillus thuringiensis isolates closely related to Bacillus anthracis.</title>
        <authorList>
            <person name="Han C.S."/>
            <person name="Xie G."/>
            <person name="Challacombe J.F."/>
            <person name="Altherr M.R."/>
            <person name="Bhotika S.S."/>
            <person name="Bruce D."/>
            <person name="Campbell C.S."/>
            <person name="Campbell M.L."/>
            <person name="Chen J."/>
            <person name="Chertkov O."/>
            <person name="Cleland C."/>
            <person name="Dimitrijevic M."/>
            <person name="Doggett N.A."/>
            <person name="Fawcett J.J."/>
            <person name="Glavina T."/>
            <person name="Goodwin L.A."/>
            <person name="Hill K.K."/>
            <person name="Hitchcock P."/>
            <person name="Jackson P.J."/>
            <person name="Keim P."/>
            <person name="Kewalramani A.R."/>
            <person name="Longmire J."/>
            <person name="Lucas S."/>
            <person name="Malfatti S."/>
            <person name="McMurry K."/>
            <person name="Meincke L.J."/>
            <person name="Misra M."/>
            <person name="Moseman B.L."/>
            <person name="Mundt M."/>
            <person name="Munk A.C."/>
            <person name="Okinaka R.T."/>
            <person name="Parson-Quintana B."/>
            <person name="Reilly L.P."/>
            <person name="Richardson P."/>
            <person name="Robinson D.L."/>
            <person name="Rubin E."/>
            <person name="Saunders E."/>
            <person name="Tapia R."/>
            <person name="Tesmer J.G."/>
            <person name="Thayer N."/>
            <person name="Thompson L.S."/>
            <person name="Tice H."/>
            <person name="Ticknor L.O."/>
            <person name="Wills P.L."/>
            <person name="Brettin T.S."/>
            <person name="Gilna P."/>
        </authorList>
    </citation>
    <scope>NUCLEOTIDE SEQUENCE [LARGE SCALE GENOMIC DNA]</scope>
    <source>
        <strain>ZK / E33L</strain>
    </source>
</reference>
<feature type="chain" id="PRO_0000284578" description="Phosphonoacetaldehyde hydrolase">
    <location>
        <begin position="1"/>
        <end position="264"/>
    </location>
</feature>
<feature type="active site" description="Nucleophile" evidence="1">
    <location>
        <position position="9"/>
    </location>
</feature>
<feature type="active site" description="Schiff-base intermediate with substrate" evidence="1">
    <location>
        <position position="50"/>
    </location>
</feature>
<feature type="binding site" evidence="1">
    <location>
        <position position="9"/>
    </location>
    <ligand>
        <name>Mg(2+)</name>
        <dbReference type="ChEBI" id="CHEBI:18420"/>
    </ligand>
</feature>
<feature type="binding site" evidence="1">
    <location>
        <position position="11"/>
    </location>
    <ligand>
        <name>Mg(2+)</name>
        <dbReference type="ChEBI" id="CHEBI:18420"/>
    </ligand>
</feature>
<feature type="binding site" evidence="1">
    <location>
        <position position="183"/>
    </location>
    <ligand>
        <name>Mg(2+)</name>
        <dbReference type="ChEBI" id="CHEBI:18420"/>
    </ligand>
</feature>
<accession>Q63E46</accession>
<keyword id="KW-0378">Hydrolase</keyword>
<keyword id="KW-0460">Magnesium</keyword>
<keyword id="KW-0479">Metal-binding</keyword>
<keyword id="KW-0704">Schiff base</keyword>
<name>PHNX_BACCZ</name>
<dbReference type="EC" id="3.11.1.1" evidence="1"/>
<dbReference type="EMBL" id="CP000001">
    <property type="protein sequence ID" value="AAU19031.1"/>
    <property type="molecule type" value="Genomic_DNA"/>
</dbReference>
<dbReference type="RefSeq" id="WP_000687373.1">
    <property type="nucleotide sequence ID" value="NZ_CP009968.1"/>
</dbReference>
<dbReference type="SMR" id="Q63E46"/>
<dbReference type="KEGG" id="bcz:BCE33L1217"/>
<dbReference type="PATRIC" id="fig|288681.22.peg.4344"/>
<dbReference type="Proteomes" id="UP000002612">
    <property type="component" value="Chromosome"/>
</dbReference>
<dbReference type="GO" id="GO:0005829">
    <property type="term" value="C:cytosol"/>
    <property type="evidence" value="ECO:0007669"/>
    <property type="project" value="TreeGrafter"/>
</dbReference>
<dbReference type="GO" id="GO:0000287">
    <property type="term" value="F:magnesium ion binding"/>
    <property type="evidence" value="ECO:0007669"/>
    <property type="project" value="UniProtKB-UniRule"/>
</dbReference>
<dbReference type="GO" id="GO:0008967">
    <property type="term" value="F:phosphoglycolate phosphatase activity"/>
    <property type="evidence" value="ECO:0007669"/>
    <property type="project" value="TreeGrafter"/>
</dbReference>
<dbReference type="GO" id="GO:0050194">
    <property type="term" value="F:phosphonoacetaldehyde hydrolase activity"/>
    <property type="evidence" value="ECO:0007669"/>
    <property type="project" value="UniProtKB-UniRule"/>
</dbReference>
<dbReference type="GO" id="GO:0006281">
    <property type="term" value="P:DNA repair"/>
    <property type="evidence" value="ECO:0007669"/>
    <property type="project" value="TreeGrafter"/>
</dbReference>
<dbReference type="GO" id="GO:0019700">
    <property type="term" value="P:organic phosphonate catabolic process"/>
    <property type="evidence" value="ECO:0007669"/>
    <property type="project" value="InterPro"/>
</dbReference>
<dbReference type="CDD" id="cd02586">
    <property type="entry name" value="HAD_PHN"/>
    <property type="match status" value="1"/>
</dbReference>
<dbReference type="FunFam" id="1.10.150.240:FF:000006">
    <property type="entry name" value="Phosphonoacetaldehyde hydrolase"/>
    <property type="match status" value="1"/>
</dbReference>
<dbReference type="FunFam" id="3.40.50.1000:FF:000072">
    <property type="entry name" value="Phosphonoacetaldehyde hydrolase"/>
    <property type="match status" value="1"/>
</dbReference>
<dbReference type="Gene3D" id="3.40.50.1000">
    <property type="entry name" value="HAD superfamily/HAD-like"/>
    <property type="match status" value="1"/>
</dbReference>
<dbReference type="Gene3D" id="1.10.150.240">
    <property type="entry name" value="Putative phosphatase, domain 2"/>
    <property type="match status" value="1"/>
</dbReference>
<dbReference type="HAMAP" id="MF_01375">
    <property type="entry name" value="PhnX"/>
    <property type="match status" value="1"/>
</dbReference>
<dbReference type="InterPro" id="IPR050155">
    <property type="entry name" value="HAD-like_hydrolase_sf"/>
</dbReference>
<dbReference type="InterPro" id="IPR036412">
    <property type="entry name" value="HAD-like_sf"/>
</dbReference>
<dbReference type="InterPro" id="IPR006439">
    <property type="entry name" value="HAD-SF_hydro_IA"/>
</dbReference>
<dbReference type="InterPro" id="IPR023214">
    <property type="entry name" value="HAD_sf"/>
</dbReference>
<dbReference type="InterPro" id="IPR023198">
    <property type="entry name" value="PGP-like_dom2"/>
</dbReference>
<dbReference type="InterPro" id="IPR006323">
    <property type="entry name" value="Phosphonoacetald_hydro"/>
</dbReference>
<dbReference type="NCBIfam" id="TIGR01549">
    <property type="entry name" value="HAD-SF-IA-v1"/>
    <property type="match status" value="1"/>
</dbReference>
<dbReference type="NCBIfam" id="TIGR01509">
    <property type="entry name" value="HAD-SF-IA-v3"/>
    <property type="match status" value="1"/>
</dbReference>
<dbReference type="NCBIfam" id="TIGR01422">
    <property type="entry name" value="phosphonatase"/>
    <property type="match status" value="1"/>
</dbReference>
<dbReference type="PANTHER" id="PTHR43434">
    <property type="entry name" value="PHOSPHOGLYCOLATE PHOSPHATASE"/>
    <property type="match status" value="1"/>
</dbReference>
<dbReference type="PANTHER" id="PTHR43434:SF19">
    <property type="entry name" value="PHOSPHONOACETALDEHYDE HYDROLASE"/>
    <property type="match status" value="1"/>
</dbReference>
<dbReference type="Pfam" id="PF00702">
    <property type="entry name" value="Hydrolase"/>
    <property type="match status" value="1"/>
</dbReference>
<dbReference type="SFLD" id="SFLDG01135">
    <property type="entry name" value="C1.5.6:_HAD__Beta-PGM__Phospha"/>
    <property type="match status" value="1"/>
</dbReference>
<dbReference type="SFLD" id="SFLDF00038">
    <property type="entry name" value="phosphonoacetaldehyde_hydrolas"/>
    <property type="match status" value="1"/>
</dbReference>
<dbReference type="SUPFAM" id="SSF56784">
    <property type="entry name" value="HAD-like"/>
    <property type="match status" value="1"/>
</dbReference>
<gene>
    <name evidence="1" type="primary">phnX</name>
    <name type="ordered locus">BCE33L1217</name>
</gene>